<dbReference type="EMBL" id="CP000239">
    <property type="protein sequence ID" value="ABC99937.1"/>
    <property type="molecule type" value="Genomic_DNA"/>
</dbReference>
<dbReference type="RefSeq" id="WP_011430613.1">
    <property type="nucleotide sequence ID" value="NC_007775.1"/>
</dbReference>
<dbReference type="SMR" id="Q2JTQ2"/>
<dbReference type="STRING" id="321327.CYA_1784"/>
<dbReference type="KEGG" id="cya:CYA_1784"/>
<dbReference type="eggNOG" id="COG0222">
    <property type="taxonomic scope" value="Bacteria"/>
</dbReference>
<dbReference type="HOGENOM" id="CLU_086499_3_0_3"/>
<dbReference type="OrthoDB" id="9811748at2"/>
<dbReference type="Proteomes" id="UP000008818">
    <property type="component" value="Chromosome"/>
</dbReference>
<dbReference type="GO" id="GO:0022625">
    <property type="term" value="C:cytosolic large ribosomal subunit"/>
    <property type="evidence" value="ECO:0007669"/>
    <property type="project" value="TreeGrafter"/>
</dbReference>
<dbReference type="GO" id="GO:0003729">
    <property type="term" value="F:mRNA binding"/>
    <property type="evidence" value="ECO:0007669"/>
    <property type="project" value="TreeGrafter"/>
</dbReference>
<dbReference type="GO" id="GO:0003735">
    <property type="term" value="F:structural constituent of ribosome"/>
    <property type="evidence" value="ECO:0007669"/>
    <property type="project" value="InterPro"/>
</dbReference>
<dbReference type="GO" id="GO:0006412">
    <property type="term" value="P:translation"/>
    <property type="evidence" value="ECO:0007669"/>
    <property type="project" value="UniProtKB-UniRule"/>
</dbReference>
<dbReference type="CDD" id="cd00387">
    <property type="entry name" value="Ribosomal_L7_L12"/>
    <property type="match status" value="1"/>
</dbReference>
<dbReference type="FunFam" id="3.30.1390.10:FF:000001">
    <property type="entry name" value="50S ribosomal protein L7/L12"/>
    <property type="match status" value="1"/>
</dbReference>
<dbReference type="Gene3D" id="3.30.1390.10">
    <property type="match status" value="1"/>
</dbReference>
<dbReference type="Gene3D" id="1.20.5.710">
    <property type="entry name" value="Single helix bin"/>
    <property type="match status" value="1"/>
</dbReference>
<dbReference type="HAMAP" id="MF_00368">
    <property type="entry name" value="Ribosomal_bL12"/>
    <property type="match status" value="1"/>
</dbReference>
<dbReference type="InterPro" id="IPR000206">
    <property type="entry name" value="Ribosomal_bL12"/>
</dbReference>
<dbReference type="InterPro" id="IPR013823">
    <property type="entry name" value="Ribosomal_bL12_C"/>
</dbReference>
<dbReference type="InterPro" id="IPR014719">
    <property type="entry name" value="Ribosomal_bL12_C/ClpS-like"/>
</dbReference>
<dbReference type="InterPro" id="IPR008932">
    <property type="entry name" value="Ribosomal_bL12_oligo"/>
</dbReference>
<dbReference type="InterPro" id="IPR036235">
    <property type="entry name" value="Ribosomal_bL12_oligo_N_sf"/>
</dbReference>
<dbReference type="NCBIfam" id="TIGR00855">
    <property type="entry name" value="L12"/>
    <property type="match status" value="1"/>
</dbReference>
<dbReference type="PANTHER" id="PTHR45987">
    <property type="entry name" value="39S RIBOSOMAL PROTEIN L12"/>
    <property type="match status" value="1"/>
</dbReference>
<dbReference type="PANTHER" id="PTHR45987:SF4">
    <property type="entry name" value="LARGE RIBOSOMAL SUBUNIT PROTEIN BL12M"/>
    <property type="match status" value="1"/>
</dbReference>
<dbReference type="Pfam" id="PF00542">
    <property type="entry name" value="Ribosomal_L12"/>
    <property type="match status" value="1"/>
</dbReference>
<dbReference type="Pfam" id="PF16320">
    <property type="entry name" value="Ribosomal_L12_N"/>
    <property type="match status" value="1"/>
</dbReference>
<dbReference type="SUPFAM" id="SSF54736">
    <property type="entry name" value="ClpS-like"/>
    <property type="match status" value="1"/>
</dbReference>
<dbReference type="SUPFAM" id="SSF48300">
    <property type="entry name" value="Ribosomal protein L7/12, oligomerisation (N-terminal) domain"/>
    <property type="match status" value="1"/>
</dbReference>
<gene>
    <name evidence="1" type="primary">rplL</name>
    <name evidence="1" type="synonym">rpl12</name>
    <name type="ordered locus">CYA_1784</name>
</gene>
<reference key="1">
    <citation type="journal article" date="2007" name="ISME J.">
        <title>Population level functional diversity in a microbial community revealed by comparative genomic and metagenomic analyses.</title>
        <authorList>
            <person name="Bhaya D."/>
            <person name="Grossman A.R."/>
            <person name="Steunou A.-S."/>
            <person name="Khuri N."/>
            <person name="Cohan F.M."/>
            <person name="Hamamura N."/>
            <person name="Melendrez M.C."/>
            <person name="Bateson M.M."/>
            <person name="Ward D.M."/>
            <person name="Heidelberg J.F."/>
        </authorList>
    </citation>
    <scope>NUCLEOTIDE SEQUENCE [LARGE SCALE GENOMIC DNA]</scope>
    <source>
        <strain>JA-3-3Ab</strain>
    </source>
</reference>
<evidence type="ECO:0000255" key="1">
    <source>
        <dbReference type="HAMAP-Rule" id="MF_00368"/>
    </source>
</evidence>
<evidence type="ECO:0000305" key="2"/>
<name>RL7_SYNJA</name>
<comment type="function">
    <text evidence="1">Forms part of the ribosomal stalk which helps the ribosome interact with GTP-bound translation factors. Is thus essential for accurate translation.</text>
</comment>
<comment type="subunit">
    <text evidence="1">Homodimer. Part of the ribosomal stalk of the 50S ribosomal subunit. Forms a multimeric L10(L12)X complex, where L10 forms an elongated spine to which 2 to 4 L12 dimers bind in a sequential fashion. Binds GTP-bound translation factors.</text>
</comment>
<comment type="similarity">
    <text evidence="1">Belongs to the bacterial ribosomal protein bL12 family.</text>
</comment>
<feature type="chain" id="PRO_0000243512" description="Large ribosomal subunit protein bL12">
    <location>
        <begin position="1"/>
        <end position="137"/>
    </location>
</feature>
<accession>Q2JTQ2</accession>
<proteinExistence type="inferred from homology"/>
<organism>
    <name type="scientific">Synechococcus sp. (strain JA-3-3Ab)</name>
    <name type="common">Cyanobacteria bacterium Yellowstone A-Prime</name>
    <dbReference type="NCBI Taxonomy" id="321327"/>
    <lineage>
        <taxon>Bacteria</taxon>
        <taxon>Bacillati</taxon>
        <taxon>Cyanobacteriota</taxon>
        <taxon>Cyanophyceae</taxon>
        <taxon>Synechococcales</taxon>
        <taxon>Synechococcaceae</taxon>
        <taxon>Synechococcus</taxon>
    </lineage>
</organism>
<protein>
    <recommendedName>
        <fullName evidence="1">Large ribosomal subunit protein bL12</fullName>
    </recommendedName>
    <alternativeName>
        <fullName evidence="2">50S ribosomal protein L7/L12</fullName>
    </alternativeName>
</protein>
<sequence length="137" mass="14145">MASERVQKILEELKALSLLEASELVKAIEEAFGVSAAAPAGGMVMAAPVAAAAAPAPAAAPEPVEEQTAFDVILEAVPADKKIAVLKVVRELTGLGLKDAKDLVEAAPKPVKEGIPKEEANEIKKKLEEAGATVKVK</sequence>
<keyword id="KW-0687">Ribonucleoprotein</keyword>
<keyword id="KW-0689">Ribosomal protein</keyword>